<reference key="1">
    <citation type="journal article" date="2004" name="Nature">
        <title>Genome sequence of the Brown Norway rat yields insights into mammalian evolution.</title>
        <authorList>
            <person name="Gibbs R.A."/>
            <person name="Weinstock G.M."/>
            <person name="Metzker M.L."/>
            <person name="Muzny D.M."/>
            <person name="Sodergren E.J."/>
            <person name="Scherer S."/>
            <person name="Scott G."/>
            <person name="Steffen D."/>
            <person name="Worley K.C."/>
            <person name="Burch P.E."/>
            <person name="Okwuonu G."/>
            <person name="Hines S."/>
            <person name="Lewis L."/>
            <person name="Deramo C."/>
            <person name="Delgado O."/>
            <person name="Dugan-Rocha S."/>
            <person name="Miner G."/>
            <person name="Morgan M."/>
            <person name="Hawes A."/>
            <person name="Gill R."/>
            <person name="Holt R.A."/>
            <person name="Adams M.D."/>
            <person name="Amanatides P.G."/>
            <person name="Baden-Tillson H."/>
            <person name="Barnstead M."/>
            <person name="Chin S."/>
            <person name="Evans C.A."/>
            <person name="Ferriera S."/>
            <person name="Fosler C."/>
            <person name="Glodek A."/>
            <person name="Gu Z."/>
            <person name="Jennings D."/>
            <person name="Kraft C.L."/>
            <person name="Nguyen T."/>
            <person name="Pfannkoch C.M."/>
            <person name="Sitter C."/>
            <person name="Sutton G.G."/>
            <person name="Venter J.C."/>
            <person name="Woodage T."/>
            <person name="Smith D."/>
            <person name="Lee H.-M."/>
            <person name="Gustafson E."/>
            <person name="Cahill P."/>
            <person name="Kana A."/>
            <person name="Doucette-Stamm L."/>
            <person name="Weinstock K."/>
            <person name="Fechtel K."/>
            <person name="Weiss R.B."/>
            <person name="Dunn D.M."/>
            <person name="Green E.D."/>
            <person name="Blakesley R.W."/>
            <person name="Bouffard G.G."/>
            <person name="De Jong P.J."/>
            <person name="Osoegawa K."/>
            <person name="Zhu B."/>
            <person name="Marra M."/>
            <person name="Schein J."/>
            <person name="Bosdet I."/>
            <person name="Fjell C."/>
            <person name="Jones S."/>
            <person name="Krzywinski M."/>
            <person name="Mathewson C."/>
            <person name="Siddiqui A."/>
            <person name="Wye N."/>
            <person name="McPherson J."/>
            <person name="Zhao S."/>
            <person name="Fraser C.M."/>
            <person name="Shetty J."/>
            <person name="Shatsman S."/>
            <person name="Geer K."/>
            <person name="Chen Y."/>
            <person name="Abramzon S."/>
            <person name="Nierman W.C."/>
            <person name="Havlak P.H."/>
            <person name="Chen R."/>
            <person name="Durbin K.J."/>
            <person name="Egan A."/>
            <person name="Ren Y."/>
            <person name="Song X.-Z."/>
            <person name="Li B."/>
            <person name="Liu Y."/>
            <person name="Qin X."/>
            <person name="Cawley S."/>
            <person name="Cooney A.J."/>
            <person name="D'Souza L.M."/>
            <person name="Martin K."/>
            <person name="Wu J.Q."/>
            <person name="Gonzalez-Garay M.L."/>
            <person name="Jackson A.R."/>
            <person name="Kalafus K.J."/>
            <person name="McLeod M.P."/>
            <person name="Milosavljevic A."/>
            <person name="Virk D."/>
            <person name="Volkov A."/>
            <person name="Wheeler D.A."/>
            <person name="Zhang Z."/>
            <person name="Bailey J.A."/>
            <person name="Eichler E.E."/>
            <person name="Tuzun E."/>
            <person name="Birney E."/>
            <person name="Mongin E."/>
            <person name="Ureta-Vidal A."/>
            <person name="Woodwark C."/>
            <person name="Zdobnov E."/>
            <person name="Bork P."/>
            <person name="Suyama M."/>
            <person name="Torrents D."/>
            <person name="Alexandersson M."/>
            <person name="Trask B.J."/>
            <person name="Young J.M."/>
            <person name="Huang H."/>
            <person name="Wang H."/>
            <person name="Xing H."/>
            <person name="Daniels S."/>
            <person name="Gietzen D."/>
            <person name="Schmidt J."/>
            <person name="Stevens K."/>
            <person name="Vitt U."/>
            <person name="Wingrove J."/>
            <person name="Camara F."/>
            <person name="Mar Alba M."/>
            <person name="Abril J.F."/>
            <person name="Guigo R."/>
            <person name="Smit A."/>
            <person name="Dubchak I."/>
            <person name="Rubin E.M."/>
            <person name="Couronne O."/>
            <person name="Poliakov A."/>
            <person name="Huebner N."/>
            <person name="Ganten D."/>
            <person name="Goesele C."/>
            <person name="Hummel O."/>
            <person name="Kreitler T."/>
            <person name="Lee Y.-A."/>
            <person name="Monti J."/>
            <person name="Schulz H."/>
            <person name="Zimdahl H."/>
            <person name="Himmelbauer H."/>
            <person name="Lehrach H."/>
            <person name="Jacob H.J."/>
            <person name="Bromberg S."/>
            <person name="Gullings-Handley J."/>
            <person name="Jensen-Seaman M.I."/>
            <person name="Kwitek A.E."/>
            <person name="Lazar J."/>
            <person name="Pasko D."/>
            <person name="Tonellato P.J."/>
            <person name="Twigger S."/>
            <person name="Ponting C.P."/>
            <person name="Duarte J.M."/>
            <person name="Rice S."/>
            <person name="Goodstadt L."/>
            <person name="Beatson S.A."/>
            <person name="Emes R.D."/>
            <person name="Winter E.E."/>
            <person name="Webber C."/>
            <person name="Brandt P."/>
            <person name="Nyakatura G."/>
            <person name="Adetobi M."/>
            <person name="Chiaromonte F."/>
            <person name="Elnitski L."/>
            <person name="Eswara P."/>
            <person name="Hardison R.C."/>
            <person name="Hou M."/>
            <person name="Kolbe D."/>
            <person name="Makova K."/>
            <person name="Miller W."/>
            <person name="Nekrutenko A."/>
            <person name="Riemer C."/>
            <person name="Schwartz S."/>
            <person name="Taylor J."/>
            <person name="Yang S."/>
            <person name="Zhang Y."/>
            <person name="Lindpaintner K."/>
            <person name="Andrews T.D."/>
            <person name="Caccamo M."/>
            <person name="Clamp M."/>
            <person name="Clarke L."/>
            <person name="Curwen V."/>
            <person name="Durbin R.M."/>
            <person name="Eyras E."/>
            <person name="Searle S.M."/>
            <person name="Cooper G.M."/>
            <person name="Batzoglou S."/>
            <person name="Brudno M."/>
            <person name="Sidow A."/>
            <person name="Stone E.A."/>
            <person name="Payseur B.A."/>
            <person name="Bourque G."/>
            <person name="Lopez-Otin C."/>
            <person name="Puente X.S."/>
            <person name="Chakrabarti K."/>
            <person name="Chatterji S."/>
            <person name="Dewey C."/>
            <person name="Pachter L."/>
            <person name="Bray N."/>
            <person name="Yap V.B."/>
            <person name="Caspi A."/>
            <person name="Tesler G."/>
            <person name="Pevzner P.A."/>
            <person name="Haussler D."/>
            <person name="Roskin K.M."/>
            <person name="Baertsch R."/>
            <person name="Clawson H."/>
            <person name="Furey T.S."/>
            <person name="Hinrichs A.S."/>
            <person name="Karolchik D."/>
            <person name="Kent W.J."/>
            <person name="Rosenbloom K.R."/>
            <person name="Trumbower H."/>
            <person name="Weirauch M."/>
            <person name="Cooper D.N."/>
            <person name="Stenson P.D."/>
            <person name="Ma B."/>
            <person name="Brent M."/>
            <person name="Arumugam M."/>
            <person name="Shteynberg D."/>
            <person name="Copley R.R."/>
            <person name="Taylor M.S."/>
            <person name="Riethman H."/>
            <person name="Mudunuri U."/>
            <person name="Peterson J."/>
            <person name="Guyer M."/>
            <person name="Felsenfeld A."/>
            <person name="Old S."/>
            <person name="Mockrin S."/>
            <person name="Collins F.S."/>
        </authorList>
    </citation>
    <scope>NUCLEOTIDE SEQUENCE [LARGE SCALE GENOMIC DNA]</scope>
    <source>
        <strain>Brown Norway</strain>
    </source>
</reference>
<reference key="2">
    <citation type="journal article" date="2005" name="Genome Res.">
        <title>Gene and alternative splicing annotation with AIR.</title>
        <authorList>
            <person name="Florea L."/>
            <person name="Di Francesco V."/>
            <person name="Miller J."/>
            <person name="Turner R."/>
            <person name="Yao A."/>
            <person name="Harris M."/>
            <person name="Walenz B."/>
            <person name="Mobarry C."/>
            <person name="Merkulov G.V."/>
            <person name="Charlab R."/>
            <person name="Dew I."/>
            <person name="Deng Z."/>
            <person name="Istrail S."/>
            <person name="Li P."/>
            <person name="Sutton G."/>
        </authorList>
    </citation>
    <scope>NUCLEOTIDE SEQUENCE [LARGE SCALE GENOMIC DNA]</scope>
    <source>
        <strain>Brown Norway</strain>
    </source>
</reference>
<reference key="3">
    <citation type="submission" date="2005-09" db="EMBL/GenBank/DDBJ databases">
        <authorList>
            <person name="Mural R.J."/>
            <person name="Adams M.D."/>
            <person name="Myers E.W."/>
            <person name="Smith H.O."/>
            <person name="Venter J.C."/>
        </authorList>
    </citation>
    <scope>NUCLEOTIDE SEQUENCE [LARGE SCALE GENOMIC DNA]</scope>
    <source>
        <strain>Brown Norway</strain>
    </source>
</reference>
<reference key="4">
    <citation type="journal article" date="2016" name="Am. J. Hum. Genet.">
        <title>Epileptic encephalopathy caused by mutations in the guanine nucleotide exchange factor DENND5A.</title>
        <authorList>
            <person name="Han C."/>
            <person name="Alkhater R."/>
            <person name="Froukh T."/>
            <person name="Minassian A.G."/>
            <person name="Galati M."/>
            <person name="Liu R.H."/>
            <person name="Fotouhi M."/>
            <person name="Sommerfeld J."/>
            <person name="Alfrook A.J."/>
            <person name="Marshall C."/>
            <person name="Walker S."/>
            <person name="Bauer P."/>
            <person name="Scherer S.W."/>
            <person name="Riess O."/>
            <person name="Buchert R."/>
            <person name="Minassian B.A."/>
            <person name="McPherson P.S."/>
        </authorList>
    </citation>
    <scope>FUNCTION</scope>
    <scope>TISSUE SPECIFICITY</scope>
    <scope>DEVELOPMENTAL STAGE</scope>
</reference>
<accession>G3V7Q0</accession>
<comment type="function">
    <text evidence="1 6">Guanine nucleotide exchange factor (GEF) which may activate RAB6A and RAB39A and/or RAB39B. Promotes the exchange of GDP to GTP, converting inactive GDP-bound Rab proteins into their active GTP-bound form (By similarity). Involved in the negative regulation of neurite outgrowth (PubMed:27866705).</text>
</comment>
<comment type="subunit">
    <text evidence="2">Interacts with RAB6A bound to GTP.</text>
</comment>
<comment type="subcellular location">
    <subcellularLocation>
        <location evidence="2">Golgi apparatus membrane</location>
    </subcellularLocation>
</comment>
<comment type="tissue specificity">
    <text evidence="6">Expressed in developing brain and developing neurons.</text>
</comment>
<comment type="developmental stage">
    <text evidence="6">In the brain, expression is high at embryonic day 18 and continually decreases through to postnatal day 60.</text>
</comment>
<comment type="similarity">
    <text evidence="7">Belongs to the RAB6IP1 family.</text>
</comment>
<organism>
    <name type="scientific">Rattus norvegicus</name>
    <name type="common">Rat</name>
    <dbReference type="NCBI Taxonomy" id="10116"/>
    <lineage>
        <taxon>Eukaryota</taxon>
        <taxon>Metazoa</taxon>
        <taxon>Chordata</taxon>
        <taxon>Craniata</taxon>
        <taxon>Vertebrata</taxon>
        <taxon>Euteleostomi</taxon>
        <taxon>Mammalia</taxon>
        <taxon>Eutheria</taxon>
        <taxon>Euarchontoglires</taxon>
        <taxon>Glires</taxon>
        <taxon>Rodentia</taxon>
        <taxon>Myomorpha</taxon>
        <taxon>Muroidea</taxon>
        <taxon>Muridae</taxon>
        <taxon>Murinae</taxon>
        <taxon>Rattus</taxon>
    </lineage>
</organism>
<dbReference type="EMBL" id="AABR07071965">
    <property type="status" value="NOT_ANNOTATED_CDS"/>
    <property type="molecule type" value="Genomic_DNA"/>
</dbReference>
<dbReference type="EMBL" id="AC098265">
    <property type="status" value="NOT_ANNOTATED_CDS"/>
    <property type="molecule type" value="Genomic_DNA"/>
</dbReference>
<dbReference type="EMBL" id="CH473956">
    <property type="protein sequence ID" value="EDM17883.1"/>
    <property type="molecule type" value="Genomic_DNA"/>
</dbReference>
<dbReference type="RefSeq" id="NP_001101016.2">
    <property type="nucleotide sequence ID" value="NM_001107546.2"/>
</dbReference>
<dbReference type="SMR" id="G3V7Q0"/>
<dbReference type="FunCoup" id="G3V7Q0">
    <property type="interactions" value="3770"/>
</dbReference>
<dbReference type="STRING" id="10116.ENSRNOP00000017485"/>
<dbReference type="iPTMnet" id="G3V7Q0"/>
<dbReference type="PhosphoSitePlus" id="G3V7Q0"/>
<dbReference type="PaxDb" id="10116-ENSRNOP00000017485"/>
<dbReference type="Ensembl" id="ENSRNOT00000017485.7">
    <property type="protein sequence ID" value="ENSRNOP00000017485.4"/>
    <property type="gene ID" value="ENSRNOG00000012206.7"/>
</dbReference>
<dbReference type="GeneID" id="308942"/>
<dbReference type="KEGG" id="rno:308942"/>
<dbReference type="AGR" id="RGD:1306759"/>
<dbReference type="CTD" id="23258"/>
<dbReference type="RGD" id="1306759">
    <property type="gene designation" value="Dennd5a"/>
</dbReference>
<dbReference type="eggNOG" id="KOG2080">
    <property type="taxonomic scope" value="Eukaryota"/>
</dbReference>
<dbReference type="GeneTree" id="ENSGT00940000153678"/>
<dbReference type="HOGENOM" id="CLU_004201_2_0_1"/>
<dbReference type="InParanoid" id="G3V7Q0"/>
<dbReference type="OMA" id="QQPYLHA"/>
<dbReference type="OrthoDB" id="6019893at2759"/>
<dbReference type="TreeFam" id="TF313237"/>
<dbReference type="Reactome" id="R-RNO-8876198">
    <property type="pathway name" value="RAB GEFs exchange GTP for GDP on RABs"/>
</dbReference>
<dbReference type="PRO" id="PR:G3V7Q0"/>
<dbReference type="Proteomes" id="UP000002494">
    <property type="component" value="Chromosome 1"/>
</dbReference>
<dbReference type="Proteomes" id="UP000234681">
    <property type="component" value="Chromosome 1"/>
</dbReference>
<dbReference type="Bgee" id="ENSRNOG00000012206">
    <property type="expression patterns" value="Expressed in brain and 20 other cell types or tissues"/>
</dbReference>
<dbReference type="GO" id="GO:0005829">
    <property type="term" value="C:cytosol"/>
    <property type="evidence" value="ECO:0007669"/>
    <property type="project" value="GOC"/>
</dbReference>
<dbReference type="GO" id="GO:0005794">
    <property type="term" value="C:Golgi apparatus"/>
    <property type="evidence" value="ECO:0000266"/>
    <property type="project" value="RGD"/>
</dbReference>
<dbReference type="GO" id="GO:0000139">
    <property type="term" value="C:Golgi membrane"/>
    <property type="evidence" value="ECO:0007669"/>
    <property type="project" value="UniProtKB-SubCell"/>
</dbReference>
<dbReference type="GO" id="GO:0030904">
    <property type="term" value="C:retromer complex"/>
    <property type="evidence" value="ECO:0000266"/>
    <property type="project" value="RGD"/>
</dbReference>
<dbReference type="GO" id="GO:0005802">
    <property type="term" value="C:trans-Golgi network"/>
    <property type="evidence" value="ECO:0000266"/>
    <property type="project" value="RGD"/>
</dbReference>
<dbReference type="GO" id="GO:0005085">
    <property type="term" value="F:guanyl-nucleotide exchange factor activity"/>
    <property type="evidence" value="ECO:0000266"/>
    <property type="project" value="RGD"/>
</dbReference>
<dbReference type="GO" id="GO:0031267">
    <property type="term" value="F:small GTPase binding"/>
    <property type="evidence" value="ECO:0000266"/>
    <property type="project" value="RGD"/>
</dbReference>
<dbReference type="GO" id="GO:0010977">
    <property type="term" value="P:negative regulation of neuron projection development"/>
    <property type="evidence" value="ECO:0000315"/>
    <property type="project" value="UniProtKB"/>
</dbReference>
<dbReference type="GO" id="GO:0042147">
    <property type="term" value="P:retrograde transport, endosome to Golgi"/>
    <property type="evidence" value="ECO:0000266"/>
    <property type="project" value="RGD"/>
</dbReference>
<dbReference type="CDD" id="cd01757">
    <property type="entry name" value="PLAT_RAB6IP1"/>
    <property type="match status" value="1"/>
</dbReference>
<dbReference type="CDD" id="cd17690">
    <property type="entry name" value="RUN1_DENND5A"/>
    <property type="match status" value="1"/>
</dbReference>
<dbReference type="CDD" id="cd17692">
    <property type="entry name" value="RUN2_DENND5A"/>
    <property type="match status" value="1"/>
</dbReference>
<dbReference type="FunFam" id="1.20.58.900:FF:000003">
    <property type="entry name" value="DENN domain containing 5A"/>
    <property type="match status" value="1"/>
</dbReference>
<dbReference type="FunFam" id="1.20.58.900:FF:000008">
    <property type="entry name" value="DENN domain containing 5B"/>
    <property type="match status" value="1"/>
</dbReference>
<dbReference type="FunFam" id="2.60.60.20:FF:000001">
    <property type="entry name" value="DENN domain containing 5B"/>
    <property type="match status" value="1"/>
</dbReference>
<dbReference type="FunFam" id="1.20.58.900:FF:000007">
    <property type="entry name" value="DENN domain-containing protein 5B"/>
    <property type="match status" value="1"/>
</dbReference>
<dbReference type="Gene3D" id="1.20.58.900">
    <property type="match status" value="3"/>
</dbReference>
<dbReference type="Gene3D" id="3.30.450.200">
    <property type="match status" value="1"/>
</dbReference>
<dbReference type="Gene3D" id="3.40.50.11500">
    <property type="match status" value="1"/>
</dbReference>
<dbReference type="Gene3D" id="2.60.60.20">
    <property type="entry name" value="PLAT/LH2 domain"/>
    <property type="match status" value="1"/>
</dbReference>
<dbReference type="InterPro" id="IPR001194">
    <property type="entry name" value="cDENN_dom"/>
</dbReference>
<dbReference type="InterPro" id="IPR005112">
    <property type="entry name" value="dDENN_dom"/>
</dbReference>
<dbReference type="InterPro" id="IPR047278">
    <property type="entry name" value="DEN5A/B"/>
</dbReference>
<dbReference type="InterPro" id="IPR043153">
    <property type="entry name" value="DENN_C"/>
</dbReference>
<dbReference type="InterPro" id="IPR001024">
    <property type="entry name" value="PLAT/LH2_dom"/>
</dbReference>
<dbReference type="InterPro" id="IPR036392">
    <property type="entry name" value="PLAT/LH2_dom_sf"/>
</dbReference>
<dbReference type="InterPro" id="IPR047277">
    <property type="entry name" value="PLAT_RAB6IP1"/>
</dbReference>
<dbReference type="InterPro" id="IPR047294">
    <property type="entry name" value="RUN1_DENND5A"/>
</dbReference>
<dbReference type="InterPro" id="IPR047295">
    <property type="entry name" value="RUN2_DENND5A"/>
</dbReference>
<dbReference type="InterPro" id="IPR004012">
    <property type="entry name" value="Run_dom"/>
</dbReference>
<dbReference type="InterPro" id="IPR037213">
    <property type="entry name" value="Run_dom_sf"/>
</dbReference>
<dbReference type="InterPro" id="IPR037516">
    <property type="entry name" value="Tripartite_DENN"/>
</dbReference>
<dbReference type="InterPro" id="IPR005113">
    <property type="entry name" value="uDENN_dom"/>
</dbReference>
<dbReference type="PANTHER" id="PTHR46070:SF2">
    <property type="entry name" value="DENN DOMAIN-CONTAINING PROTEIN 5A"/>
    <property type="match status" value="1"/>
</dbReference>
<dbReference type="PANTHER" id="PTHR46070">
    <property type="entry name" value="PINSTRIPE, ISOFORM A"/>
    <property type="match status" value="1"/>
</dbReference>
<dbReference type="Pfam" id="PF03455">
    <property type="entry name" value="dDENN"/>
    <property type="match status" value="1"/>
</dbReference>
<dbReference type="Pfam" id="PF02141">
    <property type="entry name" value="DENN"/>
    <property type="match status" value="1"/>
</dbReference>
<dbReference type="Pfam" id="PF01477">
    <property type="entry name" value="PLAT"/>
    <property type="match status" value="1"/>
</dbReference>
<dbReference type="Pfam" id="PF02759">
    <property type="entry name" value="RUN"/>
    <property type="match status" value="2"/>
</dbReference>
<dbReference type="Pfam" id="PF03456">
    <property type="entry name" value="uDENN"/>
    <property type="match status" value="1"/>
</dbReference>
<dbReference type="SMART" id="SM00801">
    <property type="entry name" value="dDENN"/>
    <property type="match status" value="1"/>
</dbReference>
<dbReference type="SMART" id="SM00799">
    <property type="entry name" value="DENN"/>
    <property type="match status" value="1"/>
</dbReference>
<dbReference type="SMART" id="SM00593">
    <property type="entry name" value="RUN"/>
    <property type="match status" value="2"/>
</dbReference>
<dbReference type="SMART" id="SM00800">
    <property type="entry name" value="uDENN"/>
    <property type="match status" value="1"/>
</dbReference>
<dbReference type="SUPFAM" id="SSF49723">
    <property type="entry name" value="Lipase/lipooxygenase domain (PLAT/LH2 domain)"/>
    <property type="match status" value="1"/>
</dbReference>
<dbReference type="SUPFAM" id="SSF140741">
    <property type="entry name" value="RUN domain-like"/>
    <property type="match status" value="2"/>
</dbReference>
<dbReference type="PROSITE" id="PS50211">
    <property type="entry name" value="DENN"/>
    <property type="match status" value="1"/>
</dbReference>
<dbReference type="PROSITE" id="PS50095">
    <property type="entry name" value="PLAT"/>
    <property type="match status" value="1"/>
</dbReference>
<dbReference type="PROSITE" id="PS50826">
    <property type="entry name" value="RUN"/>
    <property type="match status" value="2"/>
</dbReference>
<proteinExistence type="evidence at transcript level"/>
<gene>
    <name type="primary">Dennd5a</name>
</gene>
<name>DEN5A_RAT</name>
<protein>
    <recommendedName>
        <fullName>DENN domain-containing protein 5A</fullName>
    </recommendedName>
    <alternativeName>
        <fullName>Rab6-interacting protein 1</fullName>
        <shortName>Rab6IP1</shortName>
    </alternativeName>
</protein>
<keyword id="KW-0333">Golgi apparatus</keyword>
<keyword id="KW-0344">Guanine-nucleotide releasing factor</keyword>
<keyword id="KW-0472">Membrane</keyword>
<keyword id="KW-0597">Phosphoprotein</keyword>
<keyword id="KW-1185">Reference proteome</keyword>
<keyword id="KW-0677">Repeat</keyword>
<sequence length="1287" mass="146637">MSGGGGGGGSAPSRFADYFVICGLDTETGLEPDELSALCQYIQASKARDGASPFISSTTEGENFEQTPLRRTFKSKVLARYPENVDWNPFDQDAVGMLCMPKGLAFKTQADPREPQFHAFIITREDGSRTFGFALTFYEEVTSKQICSAMQTLYHMHNAEYDVLHAPLADGGDQSGMEDGEGIPGTKLQRFNSYDISRDTLYVSKCICLITPMSFMKACRSVLQQLHQAVTSPQPPPLPLESYIYNVLYEVPLPPPGRSLKFSGVYGPIICQRPSTNELPLFDFPVKEVFELLGVENVFQLFTCALLEFQILLYSQHYQRLMTVAETITALMFPFQWQHVYVPILPASLLHFLDAPVPYLMGLHSNGLDDRSKLELPQEANLCFVDVDNHFIELPEDLPQFPNKLEFVQEVSEILMAFGVPPEGNLHCSESASKLKRIRASELVSDKKNGNIAGSPLHSYELLKENETIARLQALVKRTGVSLEKLEVREDPSSNKDFKVQCDEEELRIYQLNIQIREVFANRFTQMFADYEVFVIQPSQDKESWLSNREQMQNFDKASFLSDQPEPYLPFLSRFLETQMFASFIDNKIMCHDDDDKDPVLRVFDSRVDKIRLLNVRTPTLRTSMYQKCTTVDEAEKAIELRLAKIDHTAVHPHLLDMKIGQGKYEPGFFPKLQSDVLCTGPASNKWTKRNAPAQWRRKDRQKQHTEHLRLDNDQREKYIQEARNMGSTIRQPKLSNLSPSVIAQTNWKFVEGLLKECRNKTKRMLVEKMGREAVELGHGEVNITGVEENTLIASLCDLLERIWSHGLQVKQGKSALWSHLLHYQENRQRKLTSGSLSTSGILLDSERRKSDASAVMSPLRVSLIQDMRHIQNIGEIKTDVGKARAWVRLSMEKKLLSRHLKQLLSDHELTKKLYKRYAFLRCDDEKEQFLYHLLSFNAVDYFCFTNVFTTILIPYHILIVPSKKLGGSMFTANPWICISGELGETQILQIPRNVLEMTFECQNLGKLTTVQIGHDNSGLYAKWLVEYVMVRNEITGHTYKFPCGRWLGKGMDDGSLERVLVGELLTSLPEVDERPCRTPPLQQSPSVIRRLVTISPNNKPKLNTGQIQESIGEAVNGIVKHFHKPEKERGSLTLLLCGECGLVSALEQAFQHGFKSPRLFKNVFIWDFLEKAQTYYETLEQNDVVPEENWHTRARNFCRFVTAVNNTPRNIGKDGKFQMLVCLGARDHLLHHWIALLADCPITAHMYEDVALIKDHTLVNSLIRVLQTLQEFNITLDTSLVKGIDI</sequence>
<evidence type="ECO:0000250" key="1">
    <source>
        <dbReference type="UniProtKB" id="Q6IQ26"/>
    </source>
</evidence>
<evidence type="ECO:0000250" key="2">
    <source>
        <dbReference type="UniProtKB" id="Q6PAL8"/>
    </source>
</evidence>
<evidence type="ECO:0000255" key="3">
    <source>
        <dbReference type="PROSITE-ProRule" id="PRU00152"/>
    </source>
</evidence>
<evidence type="ECO:0000255" key="4">
    <source>
        <dbReference type="PROSITE-ProRule" id="PRU00178"/>
    </source>
</evidence>
<evidence type="ECO:0000255" key="5">
    <source>
        <dbReference type="PROSITE-ProRule" id="PRU00304"/>
    </source>
</evidence>
<evidence type="ECO:0000269" key="6">
    <source>
    </source>
</evidence>
<evidence type="ECO:0000305" key="7"/>
<feature type="chain" id="PRO_0000440130" description="DENN domain-containing protein 5A">
    <location>
        <begin position="1"/>
        <end position="1287"/>
    </location>
</feature>
<feature type="domain" description="uDENN" evidence="5">
    <location>
        <begin position="57"/>
        <end position="259"/>
    </location>
</feature>
<feature type="domain" description="cDENN" evidence="5">
    <location>
        <begin position="278"/>
        <end position="414"/>
    </location>
</feature>
<feature type="domain" description="dDENN" evidence="5">
    <location>
        <begin position="416"/>
        <end position="598"/>
    </location>
</feature>
<feature type="domain" description="RUN 1" evidence="4">
    <location>
        <begin position="787"/>
        <end position="950"/>
    </location>
</feature>
<feature type="domain" description="PLAT" evidence="3">
    <location>
        <begin position="954"/>
        <end position="1062"/>
    </location>
</feature>
<feature type="domain" description="RUN 2" evidence="4">
    <location>
        <begin position="1134"/>
        <end position="1280"/>
    </location>
</feature>
<feature type="modified residue" description="Phosphoserine" evidence="1">
    <location>
        <position position="193"/>
    </location>
</feature>
<feature type="modified residue" description="Phosphothreonine" evidence="2">
    <location>
        <position position="1079"/>
    </location>
</feature>
<feature type="modified residue" description="Phosphoserine" evidence="2">
    <location>
        <position position="1085"/>
    </location>
</feature>
<feature type="modified residue" description="Phosphoserine" evidence="1">
    <location>
        <position position="1087"/>
    </location>
</feature>
<feature type="modified residue" description="Phosphoserine" evidence="1">
    <location>
        <position position="1096"/>
    </location>
</feature>